<dbReference type="EC" id="2.4.2.18" evidence="1"/>
<dbReference type="EMBL" id="CP001108">
    <property type="protein sequence ID" value="ACF45602.1"/>
    <property type="molecule type" value="Genomic_DNA"/>
</dbReference>
<dbReference type="RefSeq" id="WP_012505139.1">
    <property type="nucleotide sequence ID" value="NC_011059.1"/>
</dbReference>
<dbReference type="SMR" id="B4S5K5"/>
<dbReference type="STRING" id="290512.Paes_0546"/>
<dbReference type="KEGG" id="paa:Paes_0546"/>
<dbReference type="eggNOG" id="COG0547">
    <property type="taxonomic scope" value="Bacteria"/>
</dbReference>
<dbReference type="HOGENOM" id="CLU_034315_2_1_10"/>
<dbReference type="UniPathway" id="UPA00035">
    <property type="reaction ID" value="UER00041"/>
</dbReference>
<dbReference type="Proteomes" id="UP000002725">
    <property type="component" value="Chromosome"/>
</dbReference>
<dbReference type="GO" id="GO:0005829">
    <property type="term" value="C:cytosol"/>
    <property type="evidence" value="ECO:0007669"/>
    <property type="project" value="TreeGrafter"/>
</dbReference>
<dbReference type="GO" id="GO:0004048">
    <property type="term" value="F:anthranilate phosphoribosyltransferase activity"/>
    <property type="evidence" value="ECO:0007669"/>
    <property type="project" value="UniProtKB-UniRule"/>
</dbReference>
<dbReference type="GO" id="GO:0000287">
    <property type="term" value="F:magnesium ion binding"/>
    <property type="evidence" value="ECO:0007669"/>
    <property type="project" value="UniProtKB-UniRule"/>
</dbReference>
<dbReference type="GO" id="GO:0000162">
    <property type="term" value="P:L-tryptophan biosynthetic process"/>
    <property type="evidence" value="ECO:0007669"/>
    <property type="project" value="UniProtKB-UniRule"/>
</dbReference>
<dbReference type="FunFam" id="3.40.1030.10:FF:000002">
    <property type="entry name" value="Anthranilate phosphoribosyltransferase"/>
    <property type="match status" value="1"/>
</dbReference>
<dbReference type="Gene3D" id="3.40.1030.10">
    <property type="entry name" value="Nucleoside phosphorylase/phosphoribosyltransferase catalytic domain"/>
    <property type="match status" value="1"/>
</dbReference>
<dbReference type="Gene3D" id="1.20.970.10">
    <property type="entry name" value="Transferase, Pyrimidine Nucleoside Phosphorylase, Chain C"/>
    <property type="match status" value="1"/>
</dbReference>
<dbReference type="HAMAP" id="MF_00211">
    <property type="entry name" value="TrpD"/>
    <property type="match status" value="1"/>
</dbReference>
<dbReference type="InterPro" id="IPR005940">
    <property type="entry name" value="Anthranilate_Pribosyl_Tfrase"/>
</dbReference>
<dbReference type="InterPro" id="IPR000312">
    <property type="entry name" value="Glycosyl_Trfase_fam3"/>
</dbReference>
<dbReference type="InterPro" id="IPR017459">
    <property type="entry name" value="Glycosyl_Trfase_fam3_N_dom"/>
</dbReference>
<dbReference type="InterPro" id="IPR036320">
    <property type="entry name" value="Glycosyl_Trfase_fam3_N_dom_sf"/>
</dbReference>
<dbReference type="InterPro" id="IPR035902">
    <property type="entry name" value="Nuc_phospho_transferase"/>
</dbReference>
<dbReference type="NCBIfam" id="TIGR01245">
    <property type="entry name" value="trpD"/>
    <property type="match status" value="1"/>
</dbReference>
<dbReference type="PANTHER" id="PTHR43285">
    <property type="entry name" value="ANTHRANILATE PHOSPHORIBOSYLTRANSFERASE"/>
    <property type="match status" value="1"/>
</dbReference>
<dbReference type="PANTHER" id="PTHR43285:SF2">
    <property type="entry name" value="ANTHRANILATE PHOSPHORIBOSYLTRANSFERASE"/>
    <property type="match status" value="1"/>
</dbReference>
<dbReference type="Pfam" id="PF02885">
    <property type="entry name" value="Glycos_trans_3N"/>
    <property type="match status" value="1"/>
</dbReference>
<dbReference type="Pfam" id="PF00591">
    <property type="entry name" value="Glycos_transf_3"/>
    <property type="match status" value="1"/>
</dbReference>
<dbReference type="SUPFAM" id="SSF52418">
    <property type="entry name" value="Nucleoside phosphorylase/phosphoribosyltransferase catalytic domain"/>
    <property type="match status" value="1"/>
</dbReference>
<dbReference type="SUPFAM" id="SSF47648">
    <property type="entry name" value="Nucleoside phosphorylase/phosphoribosyltransferase N-terminal domain"/>
    <property type="match status" value="1"/>
</dbReference>
<protein>
    <recommendedName>
        <fullName evidence="1">Anthranilate phosphoribosyltransferase</fullName>
        <ecNumber evidence="1">2.4.2.18</ecNumber>
    </recommendedName>
</protein>
<proteinExistence type="inferred from homology"/>
<name>TRPD_PROA2</name>
<feature type="chain" id="PRO_1000099831" description="Anthranilate phosphoribosyltransferase">
    <location>
        <begin position="1"/>
        <end position="351"/>
    </location>
</feature>
<feature type="binding site" evidence="1">
    <location>
        <position position="80"/>
    </location>
    <ligand>
        <name>5-phospho-alpha-D-ribose 1-diphosphate</name>
        <dbReference type="ChEBI" id="CHEBI:58017"/>
    </ligand>
</feature>
<feature type="binding site" evidence="1">
    <location>
        <position position="80"/>
    </location>
    <ligand>
        <name>anthranilate</name>
        <dbReference type="ChEBI" id="CHEBI:16567"/>
        <label>1</label>
    </ligand>
</feature>
<feature type="binding site" evidence="1">
    <location>
        <begin position="83"/>
        <end position="84"/>
    </location>
    <ligand>
        <name>5-phospho-alpha-D-ribose 1-diphosphate</name>
        <dbReference type="ChEBI" id="CHEBI:58017"/>
    </ligand>
</feature>
<feature type="binding site" evidence="1">
    <location>
        <position position="88"/>
    </location>
    <ligand>
        <name>5-phospho-alpha-D-ribose 1-diphosphate</name>
        <dbReference type="ChEBI" id="CHEBI:58017"/>
    </ligand>
</feature>
<feature type="binding site" evidence="1">
    <location>
        <begin position="90"/>
        <end position="93"/>
    </location>
    <ligand>
        <name>5-phospho-alpha-D-ribose 1-diphosphate</name>
        <dbReference type="ChEBI" id="CHEBI:58017"/>
    </ligand>
</feature>
<feature type="binding site" evidence="1">
    <location>
        <position position="92"/>
    </location>
    <ligand>
        <name>Mg(2+)</name>
        <dbReference type="ChEBI" id="CHEBI:18420"/>
        <label>1</label>
    </ligand>
</feature>
<feature type="binding site" evidence="1">
    <location>
        <begin position="108"/>
        <end position="116"/>
    </location>
    <ligand>
        <name>5-phospho-alpha-D-ribose 1-diphosphate</name>
        <dbReference type="ChEBI" id="CHEBI:58017"/>
    </ligand>
</feature>
<feature type="binding site" evidence="1">
    <location>
        <position position="111"/>
    </location>
    <ligand>
        <name>anthranilate</name>
        <dbReference type="ChEBI" id="CHEBI:16567"/>
        <label>1</label>
    </ligand>
</feature>
<feature type="binding site" evidence="1">
    <location>
        <position position="120"/>
    </location>
    <ligand>
        <name>5-phospho-alpha-D-ribose 1-diphosphate</name>
        <dbReference type="ChEBI" id="CHEBI:58017"/>
    </ligand>
</feature>
<feature type="binding site" evidence="1">
    <location>
        <position position="166"/>
    </location>
    <ligand>
        <name>anthranilate</name>
        <dbReference type="ChEBI" id="CHEBI:16567"/>
        <label>2</label>
    </ligand>
</feature>
<feature type="binding site" evidence="1">
    <location>
        <position position="229"/>
    </location>
    <ligand>
        <name>Mg(2+)</name>
        <dbReference type="ChEBI" id="CHEBI:18420"/>
        <label>2</label>
    </ligand>
</feature>
<feature type="binding site" evidence="1">
    <location>
        <position position="230"/>
    </location>
    <ligand>
        <name>Mg(2+)</name>
        <dbReference type="ChEBI" id="CHEBI:18420"/>
        <label>1</label>
    </ligand>
</feature>
<feature type="binding site" evidence="1">
    <location>
        <position position="230"/>
    </location>
    <ligand>
        <name>Mg(2+)</name>
        <dbReference type="ChEBI" id="CHEBI:18420"/>
        <label>2</label>
    </ligand>
</feature>
<gene>
    <name evidence="1" type="primary">trpD</name>
    <name type="ordered locus">Paes_0546</name>
</gene>
<keyword id="KW-0028">Amino-acid biosynthesis</keyword>
<keyword id="KW-0057">Aromatic amino acid biosynthesis</keyword>
<keyword id="KW-0328">Glycosyltransferase</keyword>
<keyword id="KW-0460">Magnesium</keyword>
<keyword id="KW-0479">Metal-binding</keyword>
<keyword id="KW-0808">Transferase</keyword>
<keyword id="KW-0822">Tryptophan biosynthesis</keyword>
<reference key="1">
    <citation type="submission" date="2008-06" db="EMBL/GenBank/DDBJ databases">
        <title>Complete sequence of chromosome of Prosthecochloris aestuarii DSM 271.</title>
        <authorList>
            <consortium name="US DOE Joint Genome Institute"/>
            <person name="Lucas S."/>
            <person name="Copeland A."/>
            <person name="Lapidus A."/>
            <person name="Glavina del Rio T."/>
            <person name="Dalin E."/>
            <person name="Tice H."/>
            <person name="Bruce D."/>
            <person name="Goodwin L."/>
            <person name="Pitluck S."/>
            <person name="Schmutz J."/>
            <person name="Larimer F."/>
            <person name="Land M."/>
            <person name="Hauser L."/>
            <person name="Kyrpides N."/>
            <person name="Anderson I."/>
            <person name="Liu Z."/>
            <person name="Li T."/>
            <person name="Zhao F."/>
            <person name="Overmann J."/>
            <person name="Bryant D.A."/>
            <person name="Richardson P."/>
        </authorList>
    </citation>
    <scope>NUCLEOTIDE SEQUENCE [LARGE SCALE GENOMIC DNA]</scope>
    <source>
        <strain>DSM 271 / SK 413</strain>
    </source>
</reference>
<sequence>MQQNALLQQLLADNDLSSAEMEACITAIMTGGFSDIAIAAILALLQKKGVKATELSGAYRAMMTHAIPIELDEHAVDTCGTGGDHAGTFNVSTVAAIIANGAGVSIAKHGNRSVTSRCGSADVLEALGYTIDLSPEATMELFSKTRFAFLFAPLYHPSMKAVAHIRRELGIRTIFNTLGPLANPACVKRQVIGVYDPSIMELYIETLMKTGCRHAMVVHGKTESGAPLDESSVCGITHISELHEGVVSYHSVIPEEFGLSRWKTADLKGGDREDNAMIIRRILDGSASQAQIDASIYAAAMACYVSGKATCIDEGLCLCKESLENGDAAKNFSRILDLNREIADKHRTAVN</sequence>
<comment type="function">
    <text evidence="1">Catalyzes the transfer of the phosphoribosyl group of 5-phosphorylribose-1-pyrophosphate (PRPP) to anthranilate to yield N-(5'-phosphoribosyl)-anthranilate (PRA).</text>
</comment>
<comment type="catalytic activity">
    <reaction evidence="1">
        <text>N-(5-phospho-beta-D-ribosyl)anthranilate + diphosphate = 5-phospho-alpha-D-ribose 1-diphosphate + anthranilate</text>
        <dbReference type="Rhea" id="RHEA:11768"/>
        <dbReference type="ChEBI" id="CHEBI:16567"/>
        <dbReference type="ChEBI" id="CHEBI:18277"/>
        <dbReference type="ChEBI" id="CHEBI:33019"/>
        <dbReference type="ChEBI" id="CHEBI:58017"/>
        <dbReference type="EC" id="2.4.2.18"/>
    </reaction>
</comment>
<comment type="cofactor">
    <cofactor evidence="1">
        <name>Mg(2+)</name>
        <dbReference type="ChEBI" id="CHEBI:18420"/>
    </cofactor>
    <text evidence="1">Binds 2 magnesium ions per monomer.</text>
</comment>
<comment type="pathway">
    <text evidence="1">Amino-acid biosynthesis; L-tryptophan biosynthesis; L-tryptophan from chorismate: step 2/5.</text>
</comment>
<comment type="subunit">
    <text evidence="1">Homodimer.</text>
</comment>
<comment type="similarity">
    <text evidence="1">Belongs to the anthranilate phosphoribosyltransferase family.</text>
</comment>
<organism>
    <name type="scientific">Prosthecochloris aestuarii (strain DSM 271 / SK 413)</name>
    <dbReference type="NCBI Taxonomy" id="290512"/>
    <lineage>
        <taxon>Bacteria</taxon>
        <taxon>Pseudomonadati</taxon>
        <taxon>Chlorobiota</taxon>
        <taxon>Chlorobiia</taxon>
        <taxon>Chlorobiales</taxon>
        <taxon>Chlorobiaceae</taxon>
        <taxon>Prosthecochloris</taxon>
    </lineage>
</organism>
<evidence type="ECO:0000255" key="1">
    <source>
        <dbReference type="HAMAP-Rule" id="MF_00211"/>
    </source>
</evidence>
<accession>B4S5K5</accession>